<gene>
    <name type="primary">MT-CYB</name>
    <name type="synonym">COB</name>
    <name type="synonym">CYTB</name>
    <name type="synonym">MTCYB</name>
</gene>
<name>CYB_OCEOC</name>
<proteinExistence type="inferred from homology"/>
<accession>O79209</accession>
<protein>
    <recommendedName>
        <fullName>Cytochrome b</fullName>
    </recommendedName>
    <alternativeName>
        <fullName>Complex III subunit 3</fullName>
    </alternativeName>
    <alternativeName>
        <fullName>Complex III subunit III</fullName>
    </alternativeName>
    <alternativeName>
        <fullName>Cytochrome b-c1 complex subunit 3</fullName>
    </alternativeName>
    <alternativeName>
        <fullName>Ubiquinol-cytochrome-c reductase complex cytochrome b subunit</fullName>
    </alternativeName>
</protein>
<keyword id="KW-0249">Electron transport</keyword>
<keyword id="KW-0349">Heme</keyword>
<keyword id="KW-0408">Iron</keyword>
<keyword id="KW-0472">Membrane</keyword>
<keyword id="KW-0479">Metal-binding</keyword>
<keyword id="KW-0496">Mitochondrion</keyword>
<keyword id="KW-0999">Mitochondrion inner membrane</keyword>
<keyword id="KW-0679">Respiratory chain</keyword>
<keyword id="KW-0812">Transmembrane</keyword>
<keyword id="KW-1133">Transmembrane helix</keyword>
<keyword id="KW-0813">Transport</keyword>
<keyword id="KW-0830">Ubiquinone</keyword>
<feature type="chain" id="PRO_0000061293" description="Cytochrome b">
    <location>
        <begin position="1"/>
        <end position="380"/>
    </location>
</feature>
<feature type="transmembrane region" description="Helical" evidence="2">
    <location>
        <begin position="34"/>
        <end position="54"/>
    </location>
</feature>
<feature type="transmembrane region" description="Helical" evidence="2">
    <location>
        <begin position="78"/>
        <end position="99"/>
    </location>
</feature>
<feature type="transmembrane region" description="Helical" evidence="2">
    <location>
        <begin position="114"/>
        <end position="134"/>
    </location>
</feature>
<feature type="transmembrane region" description="Helical" evidence="2">
    <location>
        <begin position="179"/>
        <end position="199"/>
    </location>
</feature>
<feature type="transmembrane region" description="Helical" evidence="2">
    <location>
        <begin position="227"/>
        <end position="247"/>
    </location>
</feature>
<feature type="transmembrane region" description="Helical" evidence="2">
    <location>
        <begin position="289"/>
        <end position="309"/>
    </location>
</feature>
<feature type="transmembrane region" description="Helical" evidence="2">
    <location>
        <begin position="321"/>
        <end position="341"/>
    </location>
</feature>
<feature type="transmembrane region" description="Helical" evidence="2">
    <location>
        <begin position="348"/>
        <end position="368"/>
    </location>
</feature>
<feature type="binding site" description="axial binding residue" evidence="2">
    <location>
        <position position="84"/>
    </location>
    <ligand>
        <name>heme b</name>
        <dbReference type="ChEBI" id="CHEBI:60344"/>
        <label>b562</label>
    </ligand>
    <ligandPart>
        <name>Fe</name>
        <dbReference type="ChEBI" id="CHEBI:18248"/>
    </ligandPart>
</feature>
<feature type="binding site" description="axial binding residue" evidence="2">
    <location>
        <position position="98"/>
    </location>
    <ligand>
        <name>heme b</name>
        <dbReference type="ChEBI" id="CHEBI:60344"/>
        <label>b566</label>
    </ligand>
    <ligandPart>
        <name>Fe</name>
        <dbReference type="ChEBI" id="CHEBI:18248"/>
    </ligandPart>
</feature>
<feature type="binding site" description="axial binding residue" evidence="2">
    <location>
        <position position="183"/>
    </location>
    <ligand>
        <name>heme b</name>
        <dbReference type="ChEBI" id="CHEBI:60344"/>
        <label>b562</label>
    </ligand>
    <ligandPart>
        <name>Fe</name>
        <dbReference type="ChEBI" id="CHEBI:18248"/>
    </ligandPart>
</feature>
<feature type="binding site" description="axial binding residue" evidence="2">
    <location>
        <position position="197"/>
    </location>
    <ligand>
        <name>heme b</name>
        <dbReference type="ChEBI" id="CHEBI:60344"/>
        <label>b566</label>
    </ligand>
    <ligandPart>
        <name>Fe</name>
        <dbReference type="ChEBI" id="CHEBI:18248"/>
    </ligandPart>
</feature>
<feature type="binding site" evidence="2">
    <location>
        <position position="202"/>
    </location>
    <ligand>
        <name>a ubiquinone</name>
        <dbReference type="ChEBI" id="CHEBI:16389"/>
    </ligand>
</feature>
<evidence type="ECO:0000250" key="1"/>
<evidence type="ECO:0000250" key="2">
    <source>
        <dbReference type="UniProtKB" id="P00157"/>
    </source>
</evidence>
<evidence type="ECO:0000255" key="3">
    <source>
        <dbReference type="PROSITE-ProRule" id="PRU00967"/>
    </source>
</evidence>
<evidence type="ECO:0000255" key="4">
    <source>
        <dbReference type="PROSITE-ProRule" id="PRU00968"/>
    </source>
</evidence>
<comment type="function">
    <text evidence="2">Component of the ubiquinol-cytochrome c reductase complex (complex III or cytochrome b-c1 complex) that is part of the mitochondrial respiratory chain. The b-c1 complex mediates electron transfer from ubiquinol to cytochrome c. Contributes to the generation of a proton gradient across the mitochondrial membrane that is then used for ATP synthesis.</text>
</comment>
<comment type="cofactor">
    <cofactor evidence="2">
        <name>heme b</name>
        <dbReference type="ChEBI" id="CHEBI:60344"/>
    </cofactor>
    <text evidence="2">Binds 2 heme b groups non-covalently.</text>
</comment>
<comment type="subunit">
    <text evidence="2">The cytochrome bc1 complex contains 11 subunits: 3 respiratory subunits (MT-CYB, CYC1 and UQCRFS1), 2 core proteins (UQCRC1 and UQCRC2) and 6 low-molecular weight proteins (UQCRH/QCR6, UQCRB/QCR7, UQCRQ/QCR8, UQCR10/QCR9, UQCR11/QCR10 and a cleavage product of UQCRFS1). This cytochrome bc1 complex then forms a dimer.</text>
</comment>
<comment type="subcellular location">
    <subcellularLocation>
        <location evidence="2">Mitochondrion inner membrane</location>
        <topology evidence="2">Multi-pass membrane protein</topology>
    </subcellularLocation>
</comment>
<comment type="miscellaneous">
    <text evidence="1">Heme 1 (or BL or b562) is low-potential and absorbs at about 562 nm, and heme 2 (or BH or b566) is high-potential and absorbs at about 566 nm.</text>
</comment>
<comment type="similarity">
    <text evidence="3 4">Belongs to the cytochrome b family.</text>
</comment>
<comment type="caution">
    <text evidence="2">The full-length protein contains only eight transmembrane helices, not nine as predicted by bioinformatics tools.</text>
</comment>
<organism>
    <name type="scientific">Oceanites oceanicus</name>
    <name type="common">Wilson's storm petrel</name>
    <name type="synonym">Procellaria oceanica</name>
    <dbReference type="NCBI Taxonomy" id="79653"/>
    <lineage>
        <taxon>Eukaryota</taxon>
        <taxon>Metazoa</taxon>
        <taxon>Chordata</taxon>
        <taxon>Craniata</taxon>
        <taxon>Vertebrata</taxon>
        <taxon>Euteleostomi</taxon>
        <taxon>Archelosauria</taxon>
        <taxon>Archosauria</taxon>
        <taxon>Dinosauria</taxon>
        <taxon>Saurischia</taxon>
        <taxon>Theropoda</taxon>
        <taxon>Coelurosauria</taxon>
        <taxon>Aves</taxon>
        <taxon>Neognathae</taxon>
        <taxon>Neoaves</taxon>
        <taxon>Aequornithes</taxon>
        <taxon>Procellariiformes</taxon>
        <taxon>Hydrobatidae</taxon>
        <taxon>Oceanites</taxon>
    </lineage>
</organism>
<sequence>MAPNLRKSHPLLKMINNSLIDLPTPSNISAWWNFGSLLGICLATQILTGLLLAMHYTADTTLAFSSVAHTCRNVQYGWLIRNLHANGASFFFICVYLHIGRGLYYGSYLYKETWNTGILLLLTLMATAFVGYVLPWGQMSFWGATVITNLFSAIPYIGQTIVEWAWGGFSVDNPTLTRFFALHFLLPFAIAGLTLIHLTFLHESGSNNPLGIVSNCDKIPFHPYFSLKDALGFMLMFLPLTTLALFSPNLLGDPENFTPANPLVTPPHIKPEWYFLFAYAILRSIPNKLGGVLALAASVLILFLSPLLHKSKQRTMTFRPLSQLLFWTLVANLFILTWVGSQPVEHPFIIIGQLASLTYFTILLILFPITSALENKMLNY</sequence>
<dbReference type="EMBL" id="AF076062">
    <property type="protein sequence ID" value="AAC68619.1"/>
    <property type="molecule type" value="Genomic_DNA"/>
</dbReference>
<dbReference type="SMR" id="O79209"/>
<dbReference type="GO" id="GO:0005743">
    <property type="term" value="C:mitochondrial inner membrane"/>
    <property type="evidence" value="ECO:0007669"/>
    <property type="project" value="UniProtKB-SubCell"/>
</dbReference>
<dbReference type="GO" id="GO:0045275">
    <property type="term" value="C:respiratory chain complex III"/>
    <property type="evidence" value="ECO:0007669"/>
    <property type="project" value="InterPro"/>
</dbReference>
<dbReference type="GO" id="GO:0046872">
    <property type="term" value="F:metal ion binding"/>
    <property type="evidence" value="ECO:0007669"/>
    <property type="project" value="UniProtKB-KW"/>
</dbReference>
<dbReference type="GO" id="GO:0008121">
    <property type="term" value="F:ubiquinol-cytochrome-c reductase activity"/>
    <property type="evidence" value="ECO:0007669"/>
    <property type="project" value="InterPro"/>
</dbReference>
<dbReference type="GO" id="GO:0006122">
    <property type="term" value="P:mitochondrial electron transport, ubiquinol to cytochrome c"/>
    <property type="evidence" value="ECO:0007669"/>
    <property type="project" value="TreeGrafter"/>
</dbReference>
<dbReference type="CDD" id="cd00290">
    <property type="entry name" value="cytochrome_b_C"/>
    <property type="match status" value="1"/>
</dbReference>
<dbReference type="CDD" id="cd00284">
    <property type="entry name" value="Cytochrome_b_N"/>
    <property type="match status" value="1"/>
</dbReference>
<dbReference type="FunFam" id="1.20.810.10:FF:000002">
    <property type="entry name" value="Cytochrome b"/>
    <property type="match status" value="1"/>
</dbReference>
<dbReference type="Gene3D" id="1.20.810.10">
    <property type="entry name" value="Cytochrome Bc1 Complex, Chain C"/>
    <property type="match status" value="1"/>
</dbReference>
<dbReference type="InterPro" id="IPR005798">
    <property type="entry name" value="Cyt_b/b6_C"/>
</dbReference>
<dbReference type="InterPro" id="IPR036150">
    <property type="entry name" value="Cyt_b/b6_C_sf"/>
</dbReference>
<dbReference type="InterPro" id="IPR005797">
    <property type="entry name" value="Cyt_b/b6_N"/>
</dbReference>
<dbReference type="InterPro" id="IPR027387">
    <property type="entry name" value="Cytb/b6-like_sf"/>
</dbReference>
<dbReference type="InterPro" id="IPR030689">
    <property type="entry name" value="Cytochrome_b"/>
</dbReference>
<dbReference type="InterPro" id="IPR048260">
    <property type="entry name" value="Cytochrome_b_C_euk/bac"/>
</dbReference>
<dbReference type="InterPro" id="IPR048259">
    <property type="entry name" value="Cytochrome_b_N_euk/bac"/>
</dbReference>
<dbReference type="InterPro" id="IPR016174">
    <property type="entry name" value="Di-haem_cyt_TM"/>
</dbReference>
<dbReference type="PANTHER" id="PTHR19271">
    <property type="entry name" value="CYTOCHROME B"/>
    <property type="match status" value="1"/>
</dbReference>
<dbReference type="PANTHER" id="PTHR19271:SF16">
    <property type="entry name" value="CYTOCHROME B"/>
    <property type="match status" value="1"/>
</dbReference>
<dbReference type="Pfam" id="PF00032">
    <property type="entry name" value="Cytochrom_B_C"/>
    <property type="match status" value="1"/>
</dbReference>
<dbReference type="Pfam" id="PF00033">
    <property type="entry name" value="Cytochrome_B"/>
    <property type="match status" value="1"/>
</dbReference>
<dbReference type="PIRSF" id="PIRSF038885">
    <property type="entry name" value="COB"/>
    <property type="match status" value="1"/>
</dbReference>
<dbReference type="SUPFAM" id="SSF81648">
    <property type="entry name" value="a domain/subunit of cytochrome bc1 complex (Ubiquinol-cytochrome c reductase)"/>
    <property type="match status" value="1"/>
</dbReference>
<dbReference type="SUPFAM" id="SSF81342">
    <property type="entry name" value="Transmembrane di-heme cytochromes"/>
    <property type="match status" value="1"/>
</dbReference>
<dbReference type="PROSITE" id="PS51003">
    <property type="entry name" value="CYTB_CTER"/>
    <property type="match status" value="1"/>
</dbReference>
<dbReference type="PROSITE" id="PS51002">
    <property type="entry name" value="CYTB_NTER"/>
    <property type="match status" value="1"/>
</dbReference>
<geneLocation type="mitochondrion"/>
<reference key="1">
    <citation type="journal article" date="1998" name="Mol. Biol. Evol.">
        <title>Body size effects and rates of cytochrome-b evolution in tube-nosed seabirds.</title>
        <authorList>
            <person name="Nunn G.B."/>
            <person name="Stanley S.E."/>
        </authorList>
    </citation>
    <scope>NUCLEOTIDE SEQUENCE [GENOMIC DNA]</scope>
    <source>
        <strain>Isolate Wilson-1</strain>
    </source>
</reference>